<sequence>MSDNVQQQVDSVGSVTEKLQKTNISRPRKYIPPFARDKPSAGAAPAVGDDESVSSRGSSRSQTPSEFSSNYGGRREYNRGGHYGGGEGRQNNYRGGREGGYSNGGGYRNNRGFGQWRDGQHVIGARNTLLERQLFGAVADGTKVSTGINFEKYDDIPVEVSGGDIEPVNEFTSPPLNSHLLQNIKLSGYTQPTPVQKNSIPIVTSGRDLMACAQTGSGKTAGFLFPILSLAFDKGPAAVPVDQDAGMGYRPRKAYPTTLILAPTRELVCQIHEESRKFCYRSWVRPCAVYGGADIRAQIRQIDQGCDLLSATPGRLVDLIDRGRISLANIKFLVLDEADRMLDMGFEPQIRHIVEGADMTSVEERQTLMFSATFPRDIQLLARDFLKDYVFLSVGRVGSTSENITQKVVHVEDSEKRSYLLDILHTLPPEGLTLIFVETKRMADTLTDYLLNSNFPATSIHGDRTQRERERALELFRSGRTSIMVATAVASRGLDIPNVTHVINYDLPTDIDDYVHRIGRTGRAGNTGQAVAFFNRNNKGIAKELIELLQEANQECPSFLIAMARESSFGGNGRGGRYSGRGGRGGNAYGARDFRRPTNSSSGYSSGPSYSGYGGFESRTPHHGNTYNSGSAQSWW</sequence>
<reference key="1">
    <citation type="journal article" date="2002" name="J. Biol. Chem.">
        <title>The ded1 DEAD box helicase interacts with Chk1 and Cdc2.</title>
        <authorList>
            <person name="Liu H.-Y."/>
            <person name="Nefsky B.S."/>
            <person name="Walworth N.C."/>
        </authorList>
    </citation>
    <scope>NUCLEOTIDE SEQUENCE [MRNA]</scope>
    <scope>FUNCTION</scope>
    <scope>ALTERNATIVE FORMS</scope>
</reference>
<reference key="2">
    <citation type="journal article" date="2000" name="J. Cell Sci.">
        <title>A fission yeast general translation factor reveals links between protein synthesis and cell cycle controls.</title>
        <authorList>
            <person name="Grallert B."/>
            <person name="Kearsey S.E."/>
            <person name="Lenhard M."/>
            <person name="Carlson C.R."/>
            <person name="Nurse P."/>
            <person name="Boye E."/>
            <person name="Labib K."/>
        </authorList>
    </citation>
    <scope>NUCLEOTIDE SEQUENCE [GENOMIC DNA]</scope>
    <scope>FUNCTION</scope>
</reference>
<reference key="3">
    <citation type="journal article" date="1999" name="Biochim. Biophys. Acta">
        <title>Isolation of a novel gene, moc2, encoding a putative RNA helicase as a suppressor of sterile strains in Schizosaccharomyces pombe.</title>
        <authorList>
            <person name="Kawamukai M."/>
        </authorList>
    </citation>
    <scope>NUCLEOTIDE SEQUENCE [MRNA]</scope>
</reference>
<reference key="4">
    <citation type="journal article" date="1998" name="Genetics">
        <title>Suppressors of cdc25p overexpression identify two pathways that influence the G2/M checkpoint in fission yeast.</title>
        <authorList>
            <person name="Forbes K.C."/>
            <person name="Humphrey T."/>
            <person name="Enoch T."/>
        </authorList>
    </citation>
    <scope>NUCLEOTIDE SEQUENCE [MRNA]</scope>
</reference>
<reference key="5">
    <citation type="journal article" date="2005" name="Curr. Genet.">
        <title>Moc3, a novel Zn finger type protein involved in sexual development, ascus formation, and stress response of Schizosaccharomyces pombe.</title>
        <authorList>
            <person name="Goldar M.M."/>
            <person name="Jeong H.T."/>
            <person name="Tanaka K."/>
            <person name="Matsuda H."/>
            <person name="Kawamukai M."/>
        </authorList>
    </citation>
    <scope>NUCLEOTIDE SEQUENCE [GENOMIC DNA]</scope>
    <scope>FUNCTION</scope>
</reference>
<reference key="6">
    <citation type="journal article" date="2002" name="Nature">
        <title>The genome sequence of Schizosaccharomyces pombe.</title>
        <authorList>
            <person name="Wood V."/>
            <person name="Gwilliam R."/>
            <person name="Rajandream M.A."/>
            <person name="Lyne M.H."/>
            <person name="Lyne R."/>
            <person name="Stewart A."/>
            <person name="Sgouros J.G."/>
            <person name="Peat N."/>
            <person name="Hayles J."/>
            <person name="Baker S.G."/>
            <person name="Basham D."/>
            <person name="Bowman S."/>
            <person name="Brooks K."/>
            <person name="Brown D."/>
            <person name="Brown S."/>
            <person name="Chillingworth T."/>
            <person name="Churcher C.M."/>
            <person name="Collins M."/>
            <person name="Connor R."/>
            <person name="Cronin A."/>
            <person name="Davis P."/>
            <person name="Feltwell T."/>
            <person name="Fraser A."/>
            <person name="Gentles S."/>
            <person name="Goble A."/>
            <person name="Hamlin N."/>
            <person name="Harris D.E."/>
            <person name="Hidalgo J."/>
            <person name="Hodgson G."/>
            <person name="Holroyd S."/>
            <person name="Hornsby T."/>
            <person name="Howarth S."/>
            <person name="Huckle E.J."/>
            <person name="Hunt S."/>
            <person name="Jagels K."/>
            <person name="James K.D."/>
            <person name="Jones L."/>
            <person name="Jones M."/>
            <person name="Leather S."/>
            <person name="McDonald S."/>
            <person name="McLean J."/>
            <person name="Mooney P."/>
            <person name="Moule S."/>
            <person name="Mungall K.L."/>
            <person name="Murphy L.D."/>
            <person name="Niblett D."/>
            <person name="Odell C."/>
            <person name="Oliver K."/>
            <person name="O'Neil S."/>
            <person name="Pearson D."/>
            <person name="Quail M.A."/>
            <person name="Rabbinowitsch E."/>
            <person name="Rutherford K.M."/>
            <person name="Rutter S."/>
            <person name="Saunders D."/>
            <person name="Seeger K."/>
            <person name="Sharp S."/>
            <person name="Skelton J."/>
            <person name="Simmonds M.N."/>
            <person name="Squares R."/>
            <person name="Squares S."/>
            <person name="Stevens K."/>
            <person name="Taylor K."/>
            <person name="Taylor R.G."/>
            <person name="Tivey A."/>
            <person name="Walsh S.V."/>
            <person name="Warren T."/>
            <person name="Whitehead S."/>
            <person name="Woodward J.R."/>
            <person name="Volckaert G."/>
            <person name="Aert R."/>
            <person name="Robben J."/>
            <person name="Grymonprez B."/>
            <person name="Weltjens I."/>
            <person name="Vanstreels E."/>
            <person name="Rieger M."/>
            <person name="Schaefer M."/>
            <person name="Mueller-Auer S."/>
            <person name="Gabel C."/>
            <person name="Fuchs M."/>
            <person name="Duesterhoeft A."/>
            <person name="Fritzc C."/>
            <person name="Holzer E."/>
            <person name="Moestl D."/>
            <person name="Hilbert H."/>
            <person name="Borzym K."/>
            <person name="Langer I."/>
            <person name="Beck A."/>
            <person name="Lehrach H."/>
            <person name="Reinhardt R."/>
            <person name="Pohl T.M."/>
            <person name="Eger P."/>
            <person name="Zimmermann W."/>
            <person name="Wedler H."/>
            <person name="Wambutt R."/>
            <person name="Purnelle B."/>
            <person name="Goffeau A."/>
            <person name="Cadieu E."/>
            <person name="Dreano S."/>
            <person name="Gloux S."/>
            <person name="Lelaure V."/>
            <person name="Mottier S."/>
            <person name="Galibert F."/>
            <person name="Aves S.J."/>
            <person name="Xiang Z."/>
            <person name="Hunt C."/>
            <person name="Moore K."/>
            <person name="Hurst S.M."/>
            <person name="Lucas M."/>
            <person name="Rochet M."/>
            <person name="Gaillardin C."/>
            <person name="Tallada V.A."/>
            <person name="Garzon A."/>
            <person name="Thode G."/>
            <person name="Daga R.R."/>
            <person name="Cruzado L."/>
            <person name="Jimenez J."/>
            <person name="Sanchez M."/>
            <person name="del Rey F."/>
            <person name="Benito J."/>
            <person name="Dominguez A."/>
            <person name="Revuelta J.L."/>
            <person name="Moreno S."/>
            <person name="Armstrong J."/>
            <person name="Forsburg S.L."/>
            <person name="Cerutti L."/>
            <person name="Lowe T."/>
            <person name="McCombie W.R."/>
            <person name="Paulsen I."/>
            <person name="Potashkin J."/>
            <person name="Shpakovski G.V."/>
            <person name="Ussery D."/>
            <person name="Barrell B.G."/>
            <person name="Nurse P."/>
        </authorList>
    </citation>
    <scope>NUCLEOTIDE SEQUENCE [LARGE SCALE GENOMIC DNA]</scope>
    <source>
        <strain>972 / ATCC 24843</strain>
    </source>
</reference>
<reference key="7">
    <citation type="journal article" date="2000" name="Genes Cells">
        <title>Large-scale screening of intracellular protein localization in living fission yeast cells by the use of a GFP-fusion genomic DNA library.</title>
        <authorList>
            <person name="Ding D.-Q."/>
            <person name="Tomita Y."/>
            <person name="Yamamoto A."/>
            <person name="Chikashige Y."/>
            <person name="Haraguchi T."/>
            <person name="Hiraoka Y."/>
        </authorList>
    </citation>
    <scope>NUCLEOTIDE SEQUENCE [LARGE SCALE GENOMIC DNA] OF 115-339</scope>
    <scope>SUBCELLULAR LOCATION</scope>
    <source>
        <strain>ATCC 38364 / 968</strain>
    </source>
</reference>
<reference key="8">
    <citation type="journal article" date="2006" name="Nat. Biotechnol.">
        <title>ORFeome cloning and global analysis of protein localization in the fission yeast Schizosaccharomyces pombe.</title>
        <authorList>
            <person name="Matsuyama A."/>
            <person name="Arai R."/>
            <person name="Yashiroda Y."/>
            <person name="Shirai A."/>
            <person name="Kamata A."/>
            <person name="Sekido S."/>
            <person name="Kobayashi Y."/>
            <person name="Hashimoto A."/>
            <person name="Hamamoto M."/>
            <person name="Hiraoka Y."/>
            <person name="Horinouchi S."/>
            <person name="Yoshida M."/>
        </authorList>
    </citation>
    <scope>SUBCELLULAR LOCATION [LARGE SCALE ANALYSIS]</scope>
</reference>
<reference key="9">
    <citation type="journal article" date="2008" name="J. Proteome Res.">
        <title>Phosphoproteome analysis of fission yeast.</title>
        <authorList>
            <person name="Wilson-Grady J.T."/>
            <person name="Villen J."/>
            <person name="Gygi S.P."/>
        </authorList>
    </citation>
    <scope>PHOSPHORYLATION [LARGE SCALE ANALYSIS] AT SER-52; SER-54; SER-55; SER-58; SER-59; THR-63; THR-128 AND THR-312</scope>
    <scope>IDENTIFICATION BY MASS SPECTROMETRY</scope>
</reference>
<comment type="function">
    <text evidence="1 5 7 8">ATP-binding RNA helicase involved in translation initiation. Remodels RNA in response to ADP and ATP concentrations by facilitating disruption, but also formation of RNA duplexes (By similarity). Inactivation of ded1 blocks mitotic cell cycle progression at G1 and G2/M. Induces sexual development and ascus formation.</text>
</comment>
<comment type="catalytic activity">
    <reaction>
        <text>ATP + H2O = ADP + phosphate + H(+)</text>
        <dbReference type="Rhea" id="RHEA:13065"/>
        <dbReference type="ChEBI" id="CHEBI:15377"/>
        <dbReference type="ChEBI" id="CHEBI:15378"/>
        <dbReference type="ChEBI" id="CHEBI:30616"/>
        <dbReference type="ChEBI" id="CHEBI:43474"/>
        <dbReference type="ChEBI" id="CHEBI:456216"/>
        <dbReference type="EC" id="3.6.4.13"/>
    </reaction>
</comment>
<comment type="subunit">
    <text>Interacts with chk1, which is required for cell cycle arrest following DNA damage.</text>
</comment>
<comment type="interaction">
    <interactant intactId="EBI-2478405">
        <id>O13370</id>
    </interactant>
    <interactant intactId="EBI-696304">
        <id>Q10281</id>
        <label>cpc2</label>
    </interactant>
    <organismsDiffer>false</organismsDiffer>
    <experiments>3</experiments>
</comment>
<comment type="interaction">
    <interactant intactId="EBI-2478405">
        <id>O13370</id>
    </interactant>
    <interactant intactId="EBI-7169357">
        <id>P79015</id>
        <label>rpl3202</label>
    </interactant>
    <organismsDiffer>false</organismsDiffer>
    <experiments>3</experiments>
</comment>
<comment type="subcellular location">
    <subcellularLocation>
        <location evidence="6 9">Cytoplasm</location>
    </subcellularLocation>
</comment>
<comment type="domain">
    <text>The Q motif is unique to and characteristic of the DEAD box family of RNA helicases and controls ATP binding and hydrolysis.</text>
</comment>
<comment type="miscellaneous">
    <text>A different form of ded1 has been identified via SDS-PAGE studies. It is uncertain how this form arises in vivo.</text>
</comment>
<comment type="similarity">
    <text evidence="11">Belongs to the DEAD box helicase family. DDX3/DED1 subfamily.</text>
</comment>
<protein>
    <recommendedName>
        <fullName>ATP-dependent RNA helicase ded1</fullName>
        <ecNumber>3.6.4.13</ecNumber>
    </recommendedName>
    <alternativeName>
        <fullName>Multicopy suppressor of overexpressed cyr1 protein 2</fullName>
    </alternativeName>
</protein>
<organism>
    <name type="scientific">Schizosaccharomyces pombe (strain 972 / ATCC 24843)</name>
    <name type="common">Fission yeast</name>
    <dbReference type="NCBI Taxonomy" id="284812"/>
    <lineage>
        <taxon>Eukaryota</taxon>
        <taxon>Fungi</taxon>
        <taxon>Dikarya</taxon>
        <taxon>Ascomycota</taxon>
        <taxon>Taphrinomycotina</taxon>
        <taxon>Schizosaccharomycetes</taxon>
        <taxon>Schizosaccharomycetales</taxon>
        <taxon>Schizosaccharomycetaceae</taxon>
        <taxon>Schizosaccharomyces</taxon>
    </lineage>
</organism>
<proteinExistence type="evidence at protein level"/>
<dbReference type="EC" id="3.6.4.13"/>
<dbReference type="EMBL" id="AF025536">
    <property type="protein sequence ID" value="AAC04893.1"/>
    <property type="molecule type" value="mRNA"/>
</dbReference>
<dbReference type="EMBL" id="AF084222">
    <property type="protein sequence ID" value="AAC34121.1"/>
    <property type="molecule type" value="Genomic_DNA"/>
</dbReference>
<dbReference type="EMBL" id="AB012389">
    <property type="protein sequence ID" value="BAA25324.1"/>
    <property type="molecule type" value="mRNA"/>
</dbReference>
<dbReference type="EMBL" id="AJ237697">
    <property type="protein sequence ID" value="CAB40192.1"/>
    <property type="molecule type" value="mRNA"/>
</dbReference>
<dbReference type="EMBL" id="CU329672">
    <property type="protein sequence ID" value="CAA18646.1"/>
    <property type="molecule type" value="Genomic_DNA"/>
</dbReference>
<dbReference type="EMBL" id="AB027871">
    <property type="protein sequence ID" value="BAA87175.1"/>
    <property type="molecule type" value="Genomic_DNA"/>
</dbReference>
<dbReference type="PIR" id="T43543">
    <property type="entry name" value="T43543"/>
</dbReference>
<dbReference type="RefSeq" id="NP_588033.1">
    <property type="nucleotide sequence ID" value="NM_001023025.2"/>
</dbReference>
<dbReference type="SMR" id="O13370"/>
<dbReference type="BioGRID" id="275274">
    <property type="interactions" value="45"/>
</dbReference>
<dbReference type="FunCoup" id="O13370">
    <property type="interactions" value="809"/>
</dbReference>
<dbReference type="IntAct" id="O13370">
    <property type="interactions" value="11"/>
</dbReference>
<dbReference type="MINT" id="O13370"/>
<dbReference type="STRING" id="284812.O13370"/>
<dbReference type="iPTMnet" id="O13370"/>
<dbReference type="PaxDb" id="4896-SPCC1795.11.1"/>
<dbReference type="EnsemblFungi" id="SPCC1795.11.1">
    <property type="protein sequence ID" value="SPCC1795.11.1:pep"/>
    <property type="gene ID" value="SPCC1795.11"/>
</dbReference>
<dbReference type="GeneID" id="2538689"/>
<dbReference type="KEGG" id="spo:2538689"/>
<dbReference type="PomBase" id="SPCC1795.11"/>
<dbReference type="VEuPathDB" id="FungiDB:SPCC1795.11"/>
<dbReference type="eggNOG" id="KOG0335">
    <property type="taxonomic scope" value="Eukaryota"/>
</dbReference>
<dbReference type="HOGENOM" id="CLU_003041_16_3_1"/>
<dbReference type="InParanoid" id="O13370"/>
<dbReference type="OMA" id="CYRSWVR"/>
<dbReference type="PhylomeDB" id="O13370"/>
<dbReference type="Reactome" id="R-SPO-6798695">
    <property type="pathway name" value="Neutrophil degranulation"/>
</dbReference>
<dbReference type="PRO" id="PR:O13370"/>
<dbReference type="Proteomes" id="UP000002485">
    <property type="component" value="Chromosome III"/>
</dbReference>
<dbReference type="GO" id="GO:0005737">
    <property type="term" value="C:cytoplasm"/>
    <property type="evidence" value="ECO:0000269"/>
    <property type="project" value="PomBase"/>
</dbReference>
<dbReference type="GO" id="GO:0005829">
    <property type="term" value="C:cytosol"/>
    <property type="evidence" value="ECO:0007005"/>
    <property type="project" value="PomBase"/>
</dbReference>
<dbReference type="GO" id="GO:0005634">
    <property type="term" value="C:nucleus"/>
    <property type="evidence" value="ECO:0000318"/>
    <property type="project" value="GO_Central"/>
</dbReference>
<dbReference type="GO" id="GO:0005681">
    <property type="term" value="C:spliceosomal complex"/>
    <property type="evidence" value="ECO:0000314"/>
    <property type="project" value="PomBase"/>
</dbReference>
<dbReference type="GO" id="GO:0005524">
    <property type="term" value="F:ATP binding"/>
    <property type="evidence" value="ECO:0007669"/>
    <property type="project" value="UniProtKB-KW"/>
</dbReference>
<dbReference type="GO" id="GO:0016887">
    <property type="term" value="F:ATP hydrolysis activity"/>
    <property type="evidence" value="ECO:0007669"/>
    <property type="project" value="RHEA"/>
</dbReference>
<dbReference type="GO" id="GO:0003729">
    <property type="term" value="F:mRNA binding"/>
    <property type="evidence" value="ECO:0000318"/>
    <property type="project" value="GO_Central"/>
</dbReference>
<dbReference type="GO" id="GO:0003724">
    <property type="term" value="F:RNA helicase activity"/>
    <property type="evidence" value="ECO:0000318"/>
    <property type="project" value="GO_Central"/>
</dbReference>
<dbReference type="GO" id="GO:0003743">
    <property type="term" value="F:translation initiation factor activity"/>
    <property type="evidence" value="ECO:0000315"/>
    <property type="project" value="PomBase"/>
</dbReference>
<dbReference type="GO" id="GO:0051301">
    <property type="term" value="P:cell division"/>
    <property type="evidence" value="ECO:0007669"/>
    <property type="project" value="UniProtKB-KW"/>
</dbReference>
<dbReference type="GO" id="GO:0002183">
    <property type="term" value="P:cytoplasmic translational initiation"/>
    <property type="evidence" value="ECO:0000315"/>
    <property type="project" value="PomBase"/>
</dbReference>
<dbReference type="GO" id="GO:1990625">
    <property type="term" value="P:negative regulation of cytoplasmic translational initiation in response to stress"/>
    <property type="evidence" value="ECO:0000314"/>
    <property type="project" value="PomBase"/>
</dbReference>
<dbReference type="GO" id="GO:0031047">
    <property type="term" value="P:regulatory ncRNA-mediated gene silencing"/>
    <property type="evidence" value="ECO:0000314"/>
    <property type="project" value="UniProtKB"/>
</dbReference>
<dbReference type="CDD" id="cd17967">
    <property type="entry name" value="DEADc_DDX3_DDX4"/>
    <property type="match status" value="1"/>
</dbReference>
<dbReference type="CDD" id="cd18787">
    <property type="entry name" value="SF2_C_DEAD"/>
    <property type="match status" value="1"/>
</dbReference>
<dbReference type="FunFam" id="3.40.50.300:FF:000160">
    <property type="entry name" value="ATP-dependent RNA helicase DDX3X"/>
    <property type="match status" value="1"/>
</dbReference>
<dbReference type="FunFam" id="3.40.50.300:FF:000008">
    <property type="entry name" value="ATP-dependent RNA helicase RhlB"/>
    <property type="match status" value="1"/>
</dbReference>
<dbReference type="Gene3D" id="3.40.50.300">
    <property type="entry name" value="P-loop containing nucleotide triphosphate hydrolases"/>
    <property type="match status" value="2"/>
</dbReference>
<dbReference type="InterPro" id="IPR011545">
    <property type="entry name" value="DEAD/DEAH_box_helicase_dom"/>
</dbReference>
<dbReference type="InterPro" id="IPR044763">
    <property type="entry name" value="Ded1/Dbp1_DEADc"/>
</dbReference>
<dbReference type="InterPro" id="IPR014001">
    <property type="entry name" value="Helicase_ATP-bd"/>
</dbReference>
<dbReference type="InterPro" id="IPR001650">
    <property type="entry name" value="Helicase_C-like"/>
</dbReference>
<dbReference type="InterPro" id="IPR027417">
    <property type="entry name" value="P-loop_NTPase"/>
</dbReference>
<dbReference type="InterPro" id="IPR000629">
    <property type="entry name" value="RNA-helicase_DEAD-box_CS"/>
</dbReference>
<dbReference type="InterPro" id="IPR014014">
    <property type="entry name" value="RNA_helicase_DEAD_Q_motif"/>
</dbReference>
<dbReference type="PANTHER" id="PTHR47958">
    <property type="entry name" value="ATP-DEPENDENT RNA HELICASE DBP3"/>
    <property type="match status" value="1"/>
</dbReference>
<dbReference type="Pfam" id="PF00270">
    <property type="entry name" value="DEAD"/>
    <property type="match status" value="1"/>
</dbReference>
<dbReference type="Pfam" id="PF00271">
    <property type="entry name" value="Helicase_C"/>
    <property type="match status" value="1"/>
</dbReference>
<dbReference type="SMART" id="SM00487">
    <property type="entry name" value="DEXDc"/>
    <property type="match status" value="1"/>
</dbReference>
<dbReference type="SMART" id="SM00490">
    <property type="entry name" value="HELICc"/>
    <property type="match status" value="1"/>
</dbReference>
<dbReference type="SUPFAM" id="SSF52540">
    <property type="entry name" value="P-loop containing nucleoside triphosphate hydrolases"/>
    <property type="match status" value="2"/>
</dbReference>
<dbReference type="PROSITE" id="PS00039">
    <property type="entry name" value="DEAD_ATP_HELICASE"/>
    <property type="match status" value="1"/>
</dbReference>
<dbReference type="PROSITE" id="PS51192">
    <property type="entry name" value="HELICASE_ATP_BIND_1"/>
    <property type="match status" value="1"/>
</dbReference>
<dbReference type="PROSITE" id="PS51194">
    <property type="entry name" value="HELICASE_CTER"/>
    <property type="match status" value="1"/>
</dbReference>
<dbReference type="PROSITE" id="PS51195">
    <property type="entry name" value="Q_MOTIF"/>
    <property type="match status" value="1"/>
</dbReference>
<accession>O13370</accession>
<accession>O59857</accession>
<accession>Q9UU14</accession>
<gene>
    <name type="primary">ded1</name>
    <name type="synonym">dep1</name>
    <name type="synonym">moc2</name>
    <name type="synonym">sum3</name>
    <name type="ORF">SPCC1795.11</name>
</gene>
<keyword id="KW-0067">ATP-binding</keyword>
<keyword id="KW-0131">Cell cycle</keyword>
<keyword id="KW-0132">Cell division</keyword>
<keyword id="KW-0963">Cytoplasm</keyword>
<keyword id="KW-0347">Helicase</keyword>
<keyword id="KW-0378">Hydrolase</keyword>
<keyword id="KW-0396">Initiation factor</keyword>
<keyword id="KW-0498">Mitosis</keyword>
<keyword id="KW-0547">Nucleotide-binding</keyword>
<keyword id="KW-0597">Phosphoprotein</keyword>
<keyword id="KW-0648">Protein biosynthesis</keyword>
<keyword id="KW-1185">Reference proteome</keyword>
<keyword id="KW-0694">RNA-binding</keyword>
<evidence type="ECO:0000250" key="1"/>
<evidence type="ECO:0000255" key="2">
    <source>
        <dbReference type="PROSITE-ProRule" id="PRU00541"/>
    </source>
</evidence>
<evidence type="ECO:0000255" key="3">
    <source>
        <dbReference type="PROSITE-ProRule" id="PRU00542"/>
    </source>
</evidence>
<evidence type="ECO:0000256" key="4">
    <source>
        <dbReference type="SAM" id="MobiDB-lite"/>
    </source>
</evidence>
<evidence type="ECO:0000269" key="5">
    <source>
    </source>
</evidence>
<evidence type="ECO:0000269" key="6">
    <source>
    </source>
</evidence>
<evidence type="ECO:0000269" key="7">
    <source>
    </source>
</evidence>
<evidence type="ECO:0000269" key="8">
    <source>
    </source>
</evidence>
<evidence type="ECO:0000269" key="9">
    <source>
    </source>
</evidence>
<evidence type="ECO:0000269" key="10">
    <source>
    </source>
</evidence>
<evidence type="ECO:0000305" key="11"/>
<name>DED1_SCHPO</name>
<feature type="chain" id="PRO_0000055042" description="ATP-dependent RNA helicase ded1">
    <location>
        <begin position="1"/>
        <end position="636"/>
    </location>
</feature>
<feature type="domain" description="Helicase ATP-binding" evidence="2">
    <location>
        <begin position="200"/>
        <end position="392"/>
    </location>
</feature>
<feature type="domain" description="Helicase C-terminal" evidence="3">
    <location>
        <begin position="403"/>
        <end position="564"/>
    </location>
</feature>
<feature type="region of interest" description="Disordered" evidence="4">
    <location>
        <begin position="1"/>
        <end position="100"/>
    </location>
</feature>
<feature type="region of interest" description="Disordered" evidence="4">
    <location>
        <begin position="571"/>
        <end position="636"/>
    </location>
</feature>
<feature type="short sequence motif" description="Q motif">
    <location>
        <begin position="169"/>
        <end position="197"/>
    </location>
</feature>
<feature type="short sequence motif" description="DEAD box">
    <location>
        <begin position="336"/>
        <end position="339"/>
    </location>
</feature>
<feature type="compositionally biased region" description="Polar residues" evidence="4">
    <location>
        <begin position="1"/>
        <end position="14"/>
    </location>
</feature>
<feature type="compositionally biased region" description="Gly residues" evidence="4">
    <location>
        <begin position="571"/>
        <end position="588"/>
    </location>
</feature>
<feature type="compositionally biased region" description="Low complexity" evidence="4">
    <location>
        <begin position="600"/>
        <end position="611"/>
    </location>
</feature>
<feature type="compositionally biased region" description="Polar residues" evidence="4">
    <location>
        <begin position="623"/>
        <end position="636"/>
    </location>
</feature>
<feature type="binding site" evidence="2">
    <location>
        <begin position="213"/>
        <end position="220"/>
    </location>
    <ligand>
        <name>ATP</name>
        <dbReference type="ChEBI" id="CHEBI:30616"/>
    </ligand>
</feature>
<feature type="modified residue" description="Phosphoserine" evidence="10">
    <location>
        <position position="52"/>
    </location>
</feature>
<feature type="modified residue" description="Phosphoserine" evidence="10">
    <location>
        <position position="54"/>
    </location>
</feature>
<feature type="modified residue" description="Phosphoserine" evidence="10">
    <location>
        <position position="55"/>
    </location>
</feature>
<feature type="modified residue" description="Phosphoserine" evidence="10">
    <location>
        <position position="58"/>
    </location>
</feature>
<feature type="modified residue" description="Phosphoserine" evidence="10">
    <location>
        <position position="59"/>
    </location>
</feature>
<feature type="modified residue" description="Phosphothreonine" evidence="10">
    <location>
        <position position="63"/>
    </location>
</feature>
<feature type="modified residue" description="Phosphothreonine" evidence="10">
    <location>
        <position position="128"/>
    </location>
</feature>
<feature type="modified residue" description="Phosphothreonine" evidence="10">
    <location>
        <position position="312"/>
    </location>
</feature>
<feature type="sequence conflict" description="In Ref. 3; BAA25324." evidence="11" ref="3">
    <original>A</original>
    <variation>R</variation>
    <location>
        <position position="41"/>
    </location>
</feature>